<feature type="chain" id="PRO_1000005886" description="DNA-directed RNA polymerase subunit omega">
    <location>
        <begin position="1"/>
        <end position="128"/>
    </location>
</feature>
<feature type="region of interest" description="Disordered" evidence="2">
    <location>
        <begin position="87"/>
        <end position="106"/>
    </location>
</feature>
<organism>
    <name type="scientific">Anaplasma marginale (strain St. Maries)</name>
    <dbReference type="NCBI Taxonomy" id="234826"/>
    <lineage>
        <taxon>Bacteria</taxon>
        <taxon>Pseudomonadati</taxon>
        <taxon>Pseudomonadota</taxon>
        <taxon>Alphaproteobacteria</taxon>
        <taxon>Rickettsiales</taxon>
        <taxon>Anaplasmataceae</taxon>
        <taxon>Anaplasma</taxon>
    </lineage>
</organism>
<protein>
    <recommendedName>
        <fullName evidence="1">DNA-directed RNA polymerase subunit omega</fullName>
        <shortName evidence="1">RNAP omega subunit</shortName>
        <ecNumber evidence="1">2.7.7.6</ecNumber>
    </recommendedName>
    <alternativeName>
        <fullName evidence="1">RNA polymerase omega subunit</fullName>
    </alternativeName>
    <alternativeName>
        <fullName evidence="1">Transcriptase subunit omega</fullName>
    </alternativeName>
</protein>
<keyword id="KW-0240">DNA-directed RNA polymerase</keyword>
<keyword id="KW-0548">Nucleotidyltransferase</keyword>
<keyword id="KW-0804">Transcription</keyword>
<keyword id="KW-0808">Transferase</keyword>
<gene>
    <name evidence="1" type="primary">rpoZ</name>
    <name type="ordered locus">AM442</name>
</gene>
<accession>Q5PB40</accession>
<name>RPOZ_ANAMM</name>
<comment type="function">
    <text evidence="1">Promotes RNA polymerase assembly. Latches the N- and C-terminal regions of the beta' subunit thereby facilitating its interaction with the beta and alpha subunits.</text>
</comment>
<comment type="catalytic activity">
    <reaction evidence="1">
        <text>RNA(n) + a ribonucleoside 5'-triphosphate = RNA(n+1) + diphosphate</text>
        <dbReference type="Rhea" id="RHEA:21248"/>
        <dbReference type="Rhea" id="RHEA-COMP:14527"/>
        <dbReference type="Rhea" id="RHEA-COMP:17342"/>
        <dbReference type="ChEBI" id="CHEBI:33019"/>
        <dbReference type="ChEBI" id="CHEBI:61557"/>
        <dbReference type="ChEBI" id="CHEBI:140395"/>
        <dbReference type="EC" id="2.7.7.6"/>
    </reaction>
</comment>
<comment type="subunit">
    <text evidence="1">The RNAP catalytic core consists of 2 alpha, 1 beta, 1 beta' and 1 omega subunit. When a sigma factor is associated with the core the holoenzyme is formed, which can initiate transcription.</text>
</comment>
<comment type="similarity">
    <text evidence="1">Belongs to the RNA polymerase subunit omega family.</text>
</comment>
<dbReference type="EC" id="2.7.7.6" evidence="1"/>
<dbReference type="EMBL" id="CP000030">
    <property type="protein sequence ID" value="AAV86490.1"/>
    <property type="molecule type" value="Genomic_DNA"/>
</dbReference>
<dbReference type="RefSeq" id="WP_010264007.1">
    <property type="nucleotide sequence ID" value="NZ_AFMU01000053.1"/>
</dbReference>
<dbReference type="SMR" id="Q5PB40"/>
<dbReference type="KEGG" id="ama:AM442"/>
<dbReference type="HOGENOM" id="CLU_125406_2_1_5"/>
<dbReference type="GO" id="GO:0000428">
    <property type="term" value="C:DNA-directed RNA polymerase complex"/>
    <property type="evidence" value="ECO:0007669"/>
    <property type="project" value="UniProtKB-KW"/>
</dbReference>
<dbReference type="GO" id="GO:0003677">
    <property type="term" value="F:DNA binding"/>
    <property type="evidence" value="ECO:0007669"/>
    <property type="project" value="UniProtKB-UniRule"/>
</dbReference>
<dbReference type="GO" id="GO:0003899">
    <property type="term" value="F:DNA-directed RNA polymerase activity"/>
    <property type="evidence" value="ECO:0007669"/>
    <property type="project" value="UniProtKB-UniRule"/>
</dbReference>
<dbReference type="GO" id="GO:0006351">
    <property type="term" value="P:DNA-templated transcription"/>
    <property type="evidence" value="ECO:0007669"/>
    <property type="project" value="UniProtKB-UniRule"/>
</dbReference>
<dbReference type="Gene3D" id="3.90.940.10">
    <property type="match status" value="1"/>
</dbReference>
<dbReference type="HAMAP" id="MF_00366">
    <property type="entry name" value="RNApol_bact_RpoZ"/>
    <property type="match status" value="1"/>
</dbReference>
<dbReference type="InterPro" id="IPR003716">
    <property type="entry name" value="DNA-dir_RNA_pol_omega"/>
</dbReference>
<dbReference type="InterPro" id="IPR006110">
    <property type="entry name" value="Pol_omega/Rpo6/RPB6"/>
</dbReference>
<dbReference type="InterPro" id="IPR036161">
    <property type="entry name" value="RPB6/omega-like_sf"/>
</dbReference>
<dbReference type="NCBIfam" id="TIGR00690">
    <property type="entry name" value="rpoZ"/>
    <property type="match status" value="1"/>
</dbReference>
<dbReference type="Pfam" id="PF01192">
    <property type="entry name" value="RNA_pol_Rpb6"/>
    <property type="match status" value="1"/>
</dbReference>
<dbReference type="SMART" id="SM01409">
    <property type="entry name" value="RNA_pol_Rpb6"/>
    <property type="match status" value="1"/>
</dbReference>
<dbReference type="SUPFAM" id="SSF63562">
    <property type="entry name" value="RPB6/omega subunit-like"/>
    <property type="match status" value="1"/>
</dbReference>
<evidence type="ECO:0000255" key="1">
    <source>
        <dbReference type="HAMAP-Rule" id="MF_00366"/>
    </source>
</evidence>
<evidence type="ECO:0000256" key="2">
    <source>
        <dbReference type="SAM" id="MobiDB-lite"/>
    </source>
</evidence>
<reference key="1">
    <citation type="journal article" date="2005" name="Proc. Natl. Acad. Sci. U.S.A.">
        <title>Complete genome sequencing of Anaplasma marginale reveals that the surface is skewed to two superfamilies of outer membrane proteins.</title>
        <authorList>
            <person name="Brayton K.A."/>
            <person name="Kappmeyer L.S."/>
            <person name="Herndon D.R."/>
            <person name="Dark M.J."/>
            <person name="Tibbals D.L."/>
            <person name="Palmer G.H."/>
            <person name="McGuire T.C."/>
            <person name="Knowles D.P. Jr."/>
        </authorList>
    </citation>
    <scope>NUCLEOTIDE SEQUENCE [LARGE SCALE GENOMIC DNA]</scope>
    <source>
        <strain>St. Maries</strain>
    </source>
</reference>
<proteinExistence type="inferred from homology"/>
<sequence length="128" mass="13924">MREGDSGYFSCYDGNRFRLVILASQRAHELSSGACTAVARKGDKNTVVALREIVGEQLDLAAVFRLAVNRCRKYLEEFTNAREVAAARSSQAAPKSAPGQEIGKSFREKDPSAAAFLDQEQFFSGGGE</sequence>